<name>CH60_YERPA</name>
<evidence type="ECO:0000255" key="1">
    <source>
        <dbReference type="HAMAP-Rule" id="MF_00600"/>
    </source>
</evidence>
<reference key="1">
    <citation type="journal article" date="2006" name="J. Bacteriol.">
        <title>Complete genome sequence of Yersinia pestis strains Antiqua and Nepal516: evidence of gene reduction in an emerging pathogen.</title>
        <authorList>
            <person name="Chain P.S.G."/>
            <person name="Hu P."/>
            <person name="Malfatti S.A."/>
            <person name="Radnedge L."/>
            <person name="Larimer F."/>
            <person name="Vergez L.M."/>
            <person name="Worsham P."/>
            <person name="Chu M.C."/>
            <person name="Andersen G.L."/>
        </authorList>
    </citation>
    <scope>NUCLEOTIDE SEQUENCE [LARGE SCALE GENOMIC DNA]</scope>
    <source>
        <strain>Antiqua</strain>
    </source>
</reference>
<organism>
    <name type="scientific">Yersinia pestis bv. Antiqua (strain Antiqua)</name>
    <dbReference type="NCBI Taxonomy" id="360102"/>
    <lineage>
        <taxon>Bacteria</taxon>
        <taxon>Pseudomonadati</taxon>
        <taxon>Pseudomonadota</taxon>
        <taxon>Gammaproteobacteria</taxon>
        <taxon>Enterobacterales</taxon>
        <taxon>Yersiniaceae</taxon>
        <taxon>Yersinia</taxon>
    </lineage>
</organism>
<feature type="chain" id="PRO_0000257022" description="Chaperonin GroEL">
    <location>
        <begin position="1"/>
        <end position="545"/>
    </location>
</feature>
<feature type="binding site" evidence="1">
    <location>
        <begin position="30"/>
        <end position="33"/>
    </location>
    <ligand>
        <name>ATP</name>
        <dbReference type="ChEBI" id="CHEBI:30616"/>
    </ligand>
</feature>
<feature type="binding site" evidence="1">
    <location>
        <position position="51"/>
    </location>
    <ligand>
        <name>ATP</name>
        <dbReference type="ChEBI" id="CHEBI:30616"/>
    </ligand>
</feature>
<feature type="binding site" evidence="1">
    <location>
        <begin position="87"/>
        <end position="91"/>
    </location>
    <ligand>
        <name>ATP</name>
        <dbReference type="ChEBI" id="CHEBI:30616"/>
    </ligand>
</feature>
<feature type="binding site" evidence="1">
    <location>
        <position position="415"/>
    </location>
    <ligand>
        <name>ATP</name>
        <dbReference type="ChEBI" id="CHEBI:30616"/>
    </ligand>
</feature>
<feature type="binding site" evidence="1">
    <location>
        <position position="495"/>
    </location>
    <ligand>
        <name>ATP</name>
        <dbReference type="ChEBI" id="CHEBI:30616"/>
    </ligand>
</feature>
<gene>
    <name evidence="1" type="primary">groEL</name>
    <name evidence="1" type="synonym">groL</name>
    <name type="ordered locus">YPA_3931</name>
</gene>
<protein>
    <recommendedName>
        <fullName evidence="1">Chaperonin GroEL</fullName>
        <ecNumber evidence="1">5.6.1.7</ecNumber>
    </recommendedName>
    <alternativeName>
        <fullName evidence="1">60 kDa chaperonin</fullName>
    </alternativeName>
    <alternativeName>
        <fullName evidence="1">Chaperonin-60</fullName>
        <shortName evidence="1">Cpn60</shortName>
    </alternativeName>
</protein>
<comment type="function">
    <text evidence="1">Together with its co-chaperonin GroES, plays an essential role in assisting protein folding. The GroEL-GroES system forms a nano-cage that allows encapsulation of the non-native substrate proteins and provides a physical environment optimized to promote and accelerate protein folding.</text>
</comment>
<comment type="catalytic activity">
    <reaction evidence="1">
        <text>ATP + H2O + a folded polypeptide = ADP + phosphate + an unfolded polypeptide.</text>
        <dbReference type="EC" id="5.6.1.7"/>
    </reaction>
</comment>
<comment type="subunit">
    <text evidence="1">Forms a cylinder of 14 subunits composed of two heptameric rings stacked back-to-back. Interacts with the co-chaperonin GroES.</text>
</comment>
<comment type="subcellular location">
    <subcellularLocation>
        <location evidence="1">Cytoplasm</location>
    </subcellularLocation>
</comment>
<comment type="similarity">
    <text evidence="1">Belongs to the chaperonin (HSP60) family.</text>
</comment>
<proteinExistence type="inferred from homology"/>
<accession>Q1C0Y0</accession>
<keyword id="KW-0067">ATP-binding</keyword>
<keyword id="KW-0143">Chaperone</keyword>
<keyword id="KW-0963">Cytoplasm</keyword>
<keyword id="KW-0413">Isomerase</keyword>
<keyword id="KW-0547">Nucleotide-binding</keyword>
<dbReference type="EC" id="5.6.1.7" evidence="1"/>
<dbReference type="EMBL" id="CP000308">
    <property type="protein sequence ID" value="ABG15892.1"/>
    <property type="molecule type" value="Genomic_DNA"/>
</dbReference>
<dbReference type="RefSeq" id="WP_002220267.1">
    <property type="nucleotide sequence ID" value="NC_008150.1"/>
</dbReference>
<dbReference type="SMR" id="Q1C0Y0"/>
<dbReference type="KEGG" id="ypa:YPA_3931"/>
<dbReference type="Proteomes" id="UP000001971">
    <property type="component" value="Chromosome"/>
</dbReference>
<dbReference type="GO" id="GO:0005737">
    <property type="term" value="C:cytoplasm"/>
    <property type="evidence" value="ECO:0007669"/>
    <property type="project" value="UniProtKB-SubCell"/>
</dbReference>
<dbReference type="GO" id="GO:0005524">
    <property type="term" value="F:ATP binding"/>
    <property type="evidence" value="ECO:0007669"/>
    <property type="project" value="UniProtKB-UniRule"/>
</dbReference>
<dbReference type="GO" id="GO:0140662">
    <property type="term" value="F:ATP-dependent protein folding chaperone"/>
    <property type="evidence" value="ECO:0007669"/>
    <property type="project" value="InterPro"/>
</dbReference>
<dbReference type="GO" id="GO:0016853">
    <property type="term" value="F:isomerase activity"/>
    <property type="evidence" value="ECO:0007669"/>
    <property type="project" value="UniProtKB-KW"/>
</dbReference>
<dbReference type="GO" id="GO:0051082">
    <property type="term" value="F:unfolded protein binding"/>
    <property type="evidence" value="ECO:0007669"/>
    <property type="project" value="UniProtKB-UniRule"/>
</dbReference>
<dbReference type="GO" id="GO:0042026">
    <property type="term" value="P:protein refolding"/>
    <property type="evidence" value="ECO:0007669"/>
    <property type="project" value="UniProtKB-UniRule"/>
</dbReference>
<dbReference type="CDD" id="cd03344">
    <property type="entry name" value="GroEL"/>
    <property type="match status" value="1"/>
</dbReference>
<dbReference type="FunFam" id="1.10.560.10:FF:000001">
    <property type="entry name" value="60 kDa chaperonin"/>
    <property type="match status" value="1"/>
</dbReference>
<dbReference type="FunFam" id="3.50.7.10:FF:000001">
    <property type="entry name" value="60 kDa chaperonin"/>
    <property type="match status" value="1"/>
</dbReference>
<dbReference type="Gene3D" id="3.50.7.10">
    <property type="entry name" value="GroEL"/>
    <property type="match status" value="1"/>
</dbReference>
<dbReference type="Gene3D" id="1.10.560.10">
    <property type="entry name" value="GroEL-like equatorial domain"/>
    <property type="match status" value="1"/>
</dbReference>
<dbReference type="Gene3D" id="3.30.260.10">
    <property type="entry name" value="TCP-1-like chaperonin intermediate domain"/>
    <property type="match status" value="1"/>
</dbReference>
<dbReference type="HAMAP" id="MF_00600">
    <property type="entry name" value="CH60"/>
    <property type="match status" value="1"/>
</dbReference>
<dbReference type="InterPro" id="IPR018370">
    <property type="entry name" value="Chaperonin_Cpn60_CS"/>
</dbReference>
<dbReference type="InterPro" id="IPR001844">
    <property type="entry name" value="Cpn60/GroEL"/>
</dbReference>
<dbReference type="InterPro" id="IPR002423">
    <property type="entry name" value="Cpn60/GroEL/TCP-1"/>
</dbReference>
<dbReference type="InterPro" id="IPR027409">
    <property type="entry name" value="GroEL-like_apical_dom_sf"/>
</dbReference>
<dbReference type="InterPro" id="IPR027413">
    <property type="entry name" value="GROEL-like_equatorial_sf"/>
</dbReference>
<dbReference type="InterPro" id="IPR027410">
    <property type="entry name" value="TCP-1-like_intermed_sf"/>
</dbReference>
<dbReference type="NCBIfam" id="TIGR02348">
    <property type="entry name" value="GroEL"/>
    <property type="match status" value="1"/>
</dbReference>
<dbReference type="NCBIfam" id="NF000592">
    <property type="entry name" value="PRK00013.1"/>
    <property type="match status" value="1"/>
</dbReference>
<dbReference type="NCBIfam" id="NF009487">
    <property type="entry name" value="PRK12849.1"/>
    <property type="match status" value="1"/>
</dbReference>
<dbReference type="NCBIfam" id="NF009488">
    <property type="entry name" value="PRK12850.1"/>
    <property type="match status" value="1"/>
</dbReference>
<dbReference type="NCBIfam" id="NF009489">
    <property type="entry name" value="PRK12851.1"/>
    <property type="match status" value="1"/>
</dbReference>
<dbReference type="PANTHER" id="PTHR45633">
    <property type="entry name" value="60 KDA HEAT SHOCK PROTEIN, MITOCHONDRIAL"/>
    <property type="match status" value="1"/>
</dbReference>
<dbReference type="Pfam" id="PF00118">
    <property type="entry name" value="Cpn60_TCP1"/>
    <property type="match status" value="1"/>
</dbReference>
<dbReference type="PRINTS" id="PR00298">
    <property type="entry name" value="CHAPERONIN60"/>
</dbReference>
<dbReference type="SUPFAM" id="SSF52029">
    <property type="entry name" value="GroEL apical domain-like"/>
    <property type="match status" value="1"/>
</dbReference>
<dbReference type="SUPFAM" id="SSF48592">
    <property type="entry name" value="GroEL equatorial domain-like"/>
    <property type="match status" value="1"/>
</dbReference>
<dbReference type="SUPFAM" id="SSF54849">
    <property type="entry name" value="GroEL-intermediate domain like"/>
    <property type="match status" value="1"/>
</dbReference>
<dbReference type="PROSITE" id="PS00296">
    <property type="entry name" value="CHAPERONINS_CPN60"/>
    <property type="match status" value="1"/>
</dbReference>
<sequence>MAAKDVKFGNDARIKMLRGVNILADAVKVTLGPKGRNVVLDKSFGSPTITKDGVSVAREIELEDKFENMGAQMVKEVASKANDAAGDGTTTATVLAQSIITEGLKAVAAGMNPMDLKRGIDKAVIAAVEELKKLSVPCSDSKAIAQVGTISANSDSTVGELIAQAMEKVGKEGVITVEEGSGLQDELDVVEGMQFDRGYLSPYFINKPETGSIELESPFILLADKKISNIREMLPVLEAVAKAGKPLLIIAEDVEGEALATLVVNTMRGIVKVAAVKAPGFGDRRKAMLQDIATLTAGTVISEEIGLELEKTTLEDLGQAKRVVINKDTTIIIDGVGDEAAIQGRVAQIRQQIEDATSDYDKEKLQERVAKLAGGVAVIKVGAATEVEMKEKKARVEDALHATRAAVEEGVVAGGGVALIRAAHAIAGLKGDNEDQNVGIKVALRAMESPLRQIVVNAGEEASVIANKVKAGEGSFGYNAYTEEYGDMIAMGILDPTKVTRSALQYAASIAGLMITTECMVTDLPRDDKGADMGAGGMGGMGGMM</sequence>